<reference key="1">
    <citation type="submission" date="2008-10" db="EMBL/GenBank/DDBJ databases">
        <title>Genome sequence of Bacillus anthracis str. CDC 684.</title>
        <authorList>
            <person name="Dodson R.J."/>
            <person name="Munk A.C."/>
            <person name="Brettin T."/>
            <person name="Bruce D."/>
            <person name="Detter C."/>
            <person name="Tapia R."/>
            <person name="Han C."/>
            <person name="Sutton G."/>
            <person name="Sims D."/>
        </authorList>
    </citation>
    <scope>NUCLEOTIDE SEQUENCE [LARGE SCALE GENOMIC DNA]</scope>
    <source>
        <strain>CDC 684 / NRRL 3495</strain>
    </source>
</reference>
<organism>
    <name type="scientific">Bacillus anthracis (strain CDC 684 / NRRL 3495)</name>
    <dbReference type="NCBI Taxonomy" id="568206"/>
    <lineage>
        <taxon>Bacteria</taxon>
        <taxon>Bacillati</taxon>
        <taxon>Bacillota</taxon>
        <taxon>Bacilli</taxon>
        <taxon>Bacillales</taxon>
        <taxon>Bacillaceae</taxon>
        <taxon>Bacillus</taxon>
        <taxon>Bacillus cereus group</taxon>
    </lineage>
</organism>
<name>PPAX_BACAC</name>
<accession>C3LED0</accession>
<keyword id="KW-0378">Hydrolase</keyword>
<keyword id="KW-0460">Magnesium</keyword>
<evidence type="ECO:0000255" key="1">
    <source>
        <dbReference type="HAMAP-Rule" id="MF_01250"/>
    </source>
</evidence>
<gene>
    <name evidence="1" type="primary">ppaX</name>
    <name type="ordered locus">BAMEG_5443</name>
</gene>
<comment type="function">
    <text evidence="1">Hydrolyzes pyrophosphate formed during P-Ser-HPr dephosphorylation by HPrK/P. Might play a role in controlling the intracellular pyrophosphate pool.</text>
</comment>
<comment type="catalytic activity">
    <reaction evidence="1">
        <text>diphosphate + H2O = 2 phosphate + H(+)</text>
        <dbReference type="Rhea" id="RHEA:24576"/>
        <dbReference type="ChEBI" id="CHEBI:15377"/>
        <dbReference type="ChEBI" id="CHEBI:15378"/>
        <dbReference type="ChEBI" id="CHEBI:33019"/>
        <dbReference type="ChEBI" id="CHEBI:43474"/>
        <dbReference type="EC" id="3.6.1.1"/>
    </reaction>
</comment>
<comment type="cofactor">
    <cofactor evidence="1">
        <name>Mg(2+)</name>
        <dbReference type="ChEBI" id="CHEBI:18420"/>
    </cofactor>
</comment>
<comment type="similarity">
    <text evidence="1">Belongs to the HAD-like hydrolase superfamily. PpaX family.</text>
</comment>
<dbReference type="EC" id="3.6.1.1" evidence="1"/>
<dbReference type="EMBL" id="CP001215">
    <property type="protein sequence ID" value="ACP16177.1"/>
    <property type="molecule type" value="Genomic_DNA"/>
</dbReference>
<dbReference type="RefSeq" id="WP_000700958.1">
    <property type="nucleotide sequence ID" value="NC_012581.1"/>
</dbReference>
<dbReference type="SMR" id="C3LED0"/>
<dbReference type="KEGG" id="bah:BAMEG_5443"/>
<dbReference type="HOGENOM" id="CLU_045011_19_3_9"/>
<dbReference type="GO" id="GO:0005829">
    <property type="term" value="C:cytosol"/>
    <property type="evidence" value="ECO:0007669"/>
    <property type="project" value="TreeGrafter"/>
</dbReference>
<dbReference type="GO" id="GO:0004427">
    <property type="term" value="F:inorganic diphosphate phosphatase activity"/>
    <property type="evidence" value="ECO:0007669"/>
    <property type="project" value="UniProtKB-UniRule"/>
</dbReference>
<dbReference type="GO" id="GO:0000287">
    <property type="term" value="F:magnesium ion binding"/>
    <property type="evidence" value="ECO:0007669"/>
    <property type="project" value="UniProtKB-UniRule"/>
</dbReference>
<dbReference type="GO" id="GO:0008967">
    <property type="term" value="F:phosphoglycolate phosphatase activity"/>
    <property type="evidence" value="ECO:0007669"/>
    <property type="project" value="TreeGrafter"/>
</dbReference>
<dbReference type="GO" id="GO:0006281">
    <property type="term" value="P:DNA repair"/>
    <property type="evidence" value="ECO:0007669"/>
    <property type="project" value="TreeGrafter"/>
</dbReference>
<dbReference type="CDD" id="cd02616">
    <property type="entry name" value="HAD_PPase"/>
    <property type="match status" value="1"/>
</dbReference>
<dbReference type="FunFam" id="3.40.50.1000:FF:000022">
    <property type="entry name" value="Phosphoglycolate phosphatase"/>
    <property type="match status" value="1"/>
</dbReference>
<dbReference type="FunFam" id="1.10.150.240:FF:000008">
    <property type="entry name" value="Pyrophosphatase PpaX"/>
    <property type="match status" value="1"/>
</dbReference>
<dbReference type="Gene3D" id="3.40.50.1000">
    <property type="entry name" value="HAD superfamily/HAD-like"/>
    <property type="match status" value="1"/>
</dbReference>
<dbReference type="Gene3D" id="1.10.150.240">
    <property type="entry name" value="Putative phosphatase, domain 2"/>
    <property type="match status" value="1"/>
</dbReference>
<dbReference type="HAMAP" id="MF_01250">
    <property type="entry name" value="Pyrophosphat_PpaX"/>
    <property type="match status" value="1"/>
</dbReference>
<dbReference type="InterPro" id="IPR050155">
    <property type="entry name" value="HAD-like_hydrolase_sf"/>
</dbReference>
<dbReference type="InterPro" id="IPR036412">
    <property type="entry name" value="HAD-like_sf"/>
</dbReference>
<dbReference type="InterPro" id="IPR006439">
    <property type="entry name" value="HAD-SF_hydro_IA"/>
</dbReference>
<dbReference type="InterPro" id="IPR006549">
    <property type="entry name" value="HAD-SF_hydro_IIIA"/>
</dbReference>
<dbReference type="InterPro" id="IPR041492">
    <property type="entry name" value="HAD_2"/>
</dbReference>
<dbReference type="InterPro" id="IPR023214">
    <property type="entry name" value="HAD_sf"/>
</dbReference>
<dbReference type="InterPro" id="IPR023198">
    <property type="entry name" value="PGP-like_dom2"/>
</dbReference>
<dbReference type="InterPro" id="IPR023733">
    <property type="entry name" value="Pyrophosphatase_Ppax"/>
</dbReference>
<dbReference type="NCBIfam" id="TIGR01549">
    <property type="entry name" value="HAD-SF-IA-v1"/>
    <property type="match status" value="1"/>
</dbReference>
<dbReference type="NCBIfam" id="TIGR01509">
    <property type="entry name" value="HAD-SF-IA-v3"/>
    <property type="match status" value="1"/>
</dbReference>
<dbReference type="NCBIfam" id="TIGR01662">
    <property type="entry name" value="HAD-SF-IIIA"/>
    <property type="match status" value="1"/>
</dbReference>
<dbReference type="NCBIfam" id="NF009804">
    <property type="entry name" value="PRK13288.1"/>
    <property type="match status" value="1"/>
</dbReference>
<dbReference type="PANTHER" id="PTHR43434">
    <property type="entry name" value="PHOSPHOGLYCOLATE PHOSPHATASE"/>
    <property type="match status" value="1"/>
</dbReference>
<dbReference type="PANTHER" id="PTHR43434:SF26">
    <property type="entry name" value="PYROPHOSPHATASE PPAX"/>
    <property type="match status" value="1"/>
</dbReference>
<dbReference type="Pfam" id="PF13419">
    <property type="entry name" value="HAD_2"/>
    <property type="match status" value="1"/>
</dbReference>
<dbReference type="PRINTS" id="PR00413">
    <property type="entry name" value="HADHALOGNASE"/>
</dbReference>
<dbReference type="SFLD" id="SFLDG01135">
    <property type="entry name" value="C1.5.6:_HAD__Beta-PGM__Phospha"/>
    <property type="match status" value="1"/>
</dbReference>
<dbReference type="SFLD" id="SFLDG01129">
    <property type="entry name" value="C1.5:_HAD__Beta-PGM__Phosphata"/>
    <property type="match status" value="1"/>
</dbReference>
<dbReference type="SUPFAM" id="SSF56784">
    <property type="entry name" value="HAD-like"/>
    <property type="match status" value="1"/>
</dbReference>
<protein>
    <recommendedName>
        <fullName evidence="1">Pyrophosphatase PpaX</fullName>
        <ecNumber evidence="1">3.6.1.1</ecNumber>
    </recommendedName>
</protein>
<proteinExistence type="inferred from homology"/>
<feature type="chain" id="PRO_1000165083" description="Pyrophosphatase PpaX">
    <location>
        <begin position="1"/>
        <end position="216"/>
    </location>
</feature>
<feature type="active site" description="Nucleophile" evidence="1">
    <location>
        <position position="9"/>
    </location>
</feature>
<sequence length="216" mass="24751">MKINTVLFDLDGTLINTNELIISSFLHTLHTYYPNQYKREDVLPFIGPSLHDTFSKIDESKVEELITSYRQFNHDHHDELVEEYETVYETVQELKKQGYKVGIVTTKARQTVEMGLKLSKLDEFFDVVVTIDDVEHVKPHPEPLQKALQLLDAKPEEALMVGDNHHDIVGGQNAGTKTAAVSWTLKGRAYLETYKPDFMLDKMSDLLPILSDMNRS</sequence>